<proteinExistence type="evidence at protein level"/>
<accession>Q59WG7</accession>
<accession>A0A1D8PF39</accession>
<reference key="1">
    <citation type="journal article" date="2004" name="Proc. Natl. Acad. Sci. U.S.A.">
        <title>The diploid genome sequence of Candida albicans.</title>
        <authorList>
            <person name="Jones T."/>
            <person name="Federspiel N.A."/>
            <person name="Chibana H."/>
            <person name="Dungan J."/>
            <person name="Kalman S."/>
            <person name="Magee B.B."/>
            <person name="Newport G."/>
            <person name="Thorstenson Y.R."/>
            <person name="Agabian N."/>
            <person name="Magee P.T."/>
            <person name="Davis R.W."/>
            <person name="Scherer S."/>
        </authorList>
    </citation>
    <scope>NUCLEOTIDE SEQUENCE [LARGE SCALE GENOMIC DNA]</scope>
    <source>
        <strain>SC5314 / ATCC MYA-2876</strain>
    </source>
</reference>
<reference key="2">
    <citation type="journal article" date="2007" name="Genome Biol.">
        <title>Assembly of the Candida albicans genome into sixteen supercontigs aligned on the eight chromosomes.</title>
        <authorList>
            <person name="van het Hoog M."/>
            <person name="Rast T.J."/>
            <person name="Martchenko M."/>
            <person name="Grindle S."/>
            <person name="Dignard D."/>
            <person name="Hogues H."/>
            <person name="Cuomo C."/>
            <person name="Berriman M."/>
            <person name="Scherer S."/>
            <person name="Magee B.B."/>
            <person name="Whiteway M."/>
            <person name="Chibana H."/>
            <person name="Nantel A."/>
            <person name="Magee P.T."/>
        </authorList>
    </citation>
    <scope>GENOME REANNOTATION</scope>
    <source>
        <strain>SC5314 / ATCC MYA-2876</strain>
    </source>
</reference>
<reference key="3">
    <citation type="journal article" date="2013" name="Genome Biol.">
        <title>Assembly of a phased diploid Candida albicans genome facilitates allele-specific measurements and provides a simple model for repeat and indel structure.</title>
        <authorList>
            <person name="Muzzey D."/>
            <person name="Schwartz K."/>
            <person name="Weissman J.S."/>
            <person name="Sherlock G."/>
        </authorList>
    </citation>
    <scope>NUCLEOTIDE SEQUENCE [LARGE SCALE GENOMIC DNA]</scope>
    <scope>GENOME REANNOTATION</scope>
    <source>
        <strain>SC5314 / ATCC MYA-2876</strain>
    </source>
</reference>
<reference key="4">
    <citation type="journal article" date="2006" name="Infect. Immun.">
        <title>Deletion of the CaBIG1 gene reduces beta-1,6-glucan synthesis, filamentation, adhesion, and virulence in Candida albicans.</title>
        <authorList>
            <person name="Umeyama T."/>
            <person name="Kaneko A."/>
            <person name="Watanabe H."/>
            <person name="Hirai A."/>
            <person name="Uehara Y."/>
            <person name="Niimi M."/>
            <person name="Azuma M."/>
        </authorList>
    </citation>
    <scope>FUNCTION</scope>
    <scope>SUBCELLULAR LOCATION</scope>
    <scope>GLYCOSYLATION</scope>
</reference>
<feature type="signal peptide" evidence="1">
    <location>
        <begin position="1"/>
        <end position="16"/>
    </location>
</feature>
<feature type="chain" id="PRO_0000277849" description="Protein BIG1">
    <location>
        <begin position="17"/>
        <end position="322"/>
    </location>
</feature>
<feature type="topological domain" description="Lumenal" evidence="1">
    <location>
        <begin position="17"/>
        <end position="274"/>
    </location>
</feature>
<feature type="transmembrane region" description="Helical" evidence="1">
    <location>
        <begin position="275"/>
        <end position="295"/>
    </location>
</feature>
<feature type="topological domain" description="Cytoplasmic" evidence="1">
    <location>
        <begin position="296"/>
        <end position="322"/>
    </location>
</feature>
<feature type="glycosylation site" description="N-linked (GlcNAc...) asparagine" evidence="1">
    <location>
        <position position="45"/>
    </location>
</feature>
<evidence type="ECO:0000255" key="1"/>
<evidence type="ECO:0000269" key="2">
    <source>
    </source>
</evidence>
<evidence type="ECO:0000305" key="3"/>
<name>BIG1_CANAL</name>
<comment type="function">
    <text evidence="2">Required for normal beta-1,6-glucan synthesis, for hyphal morphogenesis, adhesion and virulence.</text>
</comment>
<comment type="subcellular location">
    <subcellularLocation>
        <location evidence="2">Endoplasmic reticulum membrane</location>
        <topology evidence="2">Single-pass type I membrane protein</topology>
    </subcellularLocation>
</comment>
<comment type="PTM">
    <text evidence="2">N-glycosylated.</text>
</comment>
<comment type="miscellaneous">
    <text>Present with 3460 molecules/cell in log phase SD medium.</text>
</comment>
<comment type="similarity">
    <text evidence="3">Belongs to the BIG1 family.</text>
</comment>
<organism>
    <name type="scientific">Candida albicans (strain SC5314 / ATCC MYA-2876)</name>
    <name type="common">Yeast</name>
    <dbReference type="NCBI Taxonomy" id="237561"/>
    <lineage>
        <taxon>Eukaryota</taxon>
        <taxon>Fungi</taxon>
        <taxon>Dikarya</taxon>
        <taxon>Ascomycota</taxon>
        <taxon>Saccharomycotina</taxon>
        <taxon>Pichiomycetes</taxon>
        <taxon>Debaryomycetaceae</taxon>
        <taxon>Candida/Lodderomyces clade</taxon>
        <taxon>Candida</taxon>
    </lineage>
</organism>
<dbReference type="EMBL" id="CP017623">
    <property type="protein sequence ID" value="AOW26710.1"/>
    <property type="molecule type" value="Genomic_DNA"/>
</dbReference>
<dbReference type="RefSeq" id="XP_713939.1">
    <property type="nucleotide sequence ID" value="XM_708846.2"/>
</dbReference>
<dbReference type="SMR" id="Q59WG7"/>
<dbReference type="FunCoup" id="Q59WG7">
    <property type="interactions" value="25"/>
</dbReference>
<dbReference type="STRING" id="237561.Q59WG7"/>
<dbReference type="GlyCosmos" id="Q59WG7">
    <property type="glycosylation" value="1 site, No reported glycans"/>
</dbReference>
<dbReference type="EnsemblFungi" id="C1_10830W_A-T">
    <property type="protein sequence ID" value="C1_10830W_A-T-p1"/>
    <property type="gene ID" value="C1_10830W_A"/>
</dbReference>
<dbReference type="GeneID" id="3644434"/>
<dbReference type="KEGG" id="cal:CAALFM_C110830WA"/>
<dbReference type="CGD" id="CAL0000189708">
    <property type="gene designation" value="BIG1"/>
</dbReference>
<dbReference type="VEuPathDB" id="FungiDB:C1_10830W_A"/>
<dbReference type="eggNOG" id="ENOG502RXHV">
    <property type="taxonomic scope" value="Eukaryota"/>
</dbReference>
<dbReference type="HOGENOM" id="CLU_067894_0_0_1"/>
<dbReference type="InParanoid" id="Q59WG7"/>
<dbReference type="OrthoDB" id="9985059at2759"/>
<dbReference type="PHI-base" id="PHI:2824"/>
<dbReference type="PRO" id="PR:Q59WG7"/>
<dbReference type="Proteomes" id="UP000000559">
    <property type="component" value="Chromosome 1"/>
</dbReference>
<dbReference type="GO" id="GO:0005783">
    <property type="term" value="C:endoplasmic reticulum"/>
    <property type="evidence" value="ECO:0000314"/>
    <property type="project" value="CGD"/>
</dbReference>
<dbReference type="GO" id="GO:0005789">
    <property type="term" value="C:endoplasmic reticulum membrane"/>
    <property type="evidence" value="ECO:0000318"/>
    <property type="project" value="GO_Central"/>
</dbReference>
<dbReference type="GO" id="GO:0016020">
    <property type="term" value="C:membrane"/>
    <property type="evidence" value="ECO:0000314"/>
    <property type="project" value="CGD"/>
</dbReference>
<dbReference type="GO" id="GO:0005886">
    <property type="term" value="C:plasma membrane"/>
    <property type="evidence" value="ECO:0000314"/>
    <property type="project" value="CGD"/>
</dbReference>
<dbReference type="GO" id="GO:0006078">
    <property type="term" value="P:(1-&gt;6)-beta-D-glucan biosynthetic process"/>
    <property type="evidence" value="ECO:0000315"/>
    <property type="project" value="CGD"/>
</dbReference>
<dbReference type="GO" id="GO:0044406">
    <property type="term" value="P:adhesion of symbiont to host"/>
    <property type="evidence" value="ECO:0000315"/>
    <property type="project" value="CGD"/>
</dbReference>
<dbReference type="GO" id="GO:0071555">
    <property type="term" value="P:cell wall organization"/>
    <property type="evidence" value="ECO:0007669"/>
    <property type="project" value="UniProtKB-KW"/>
</dbReference>
<dbReference type="GO" id="GO:0009267">
    <property type="term" value="P:cellular response to starvation"/>
    <property type="evidence" value="ECO:0000315"/>
    <property type="project" value="CGD"/>
</dbReference>
<dbReference type="GO" id="GO:0030447">
    <property type="term" value="P:filamentous growth"/>
    <property type="evidence" value="ECO:0000315"/>
    <property type="project" value="CGD"/>
</dbReference>
<dbReference type="GO" id="GO:0036170">
    <property type="term" value="P:filamentous growth of a population of unicellular organisms in response to starvation"/>
    <property type="evidence" value="ECO:0000315"/>
    <property type="project" value="CGD"/>
</dbReference>
<dbReference type="GO" id="GO:0009272">
    <property type="term" value="P:fungal-type cell wall biogenesis"/>
    <property type="evidence" value="ECO:0000316"/>
    <property type="project" value="CGD"/>
</dbReference>
<dbReference type="InterPro" id="IPR037654">
    <property type="entry name" value="Big1"/>
</dbReference>
<dbReference type="PANTHER" id="PTHR28285">
    <property type="entry name" value="PROTEIN BIG1"/>
    <property type="match status" value="1"/>
</dbReference>
<dbReference type="PANTHER" id="PTHR28285:SF1">
    <property type="entry name" value="PROTEIN BIG1"/>
    <property type="match status" value="1"/>
</dbReference>
<keyword id="KW-0961">Cell wall biogenesis/degradation</keyword>
<keyword id="KW-0256">Endoplasmic reticulum</keyword>
<keyword id="KW-0325">Glycoprotein</keyword>
<keyword id="KW-0472">Membrane</keyword>
<keyword id="KW-1185">Reference proteome</keyword>
<keyword id="KW-0732">Signal</keyword>
<keyword id="KW-0812">Transmembrane</keyword>
<keyword id="KW-1133">Transmembrane helix</keyword>
<sequence length="322" mass="38099">MRLFVLLAYIIPFILCQLTPVLVASHKLVRGLKEEINPSNTLPHNVTSVTNMLKKLITECSSDAYLLINQPGLTYADLTTEKKDNWPFLRNYLYMSSTIVGLPRVENPIDLDFLEQYIISNCDAETINVWHDSEDEVVDYYDIRKRVIRIDLSPLSISNHDDRVKEIFEHDQLIRKILRKLPSAHYTIILTSLEPGIIHPVPRFLMEETPASFEIFDDIINDPFHNREIEKNDRFHKVEPNWNPIRDSNDRYYRNKKKDEIHLFDYELWEKNEKLITTIFVMVLSLFMMKIISFFNYLKQKIIQKKQQKSKRGIIADDKKLD</sequence>
<protein>
    <recommendedName>
        <fullName>Protein BIG1</fullName>
    </recommendedName>
</protein>
<gene>
    <name type="primary">BIG1</name>
    <name type="ordered locus">CAALFM_C110830WA</name>
    <name type="ORF">CaO19.2334</name>
    <name type="ORF">CaO19.9870</name>
</gene>